<sequence>MKAALFLSALASTAVGVVAEELKIDVTLPVICERKTQKGDGVHMHYRGTLKDSGKQFDASYDRGTPLSFKVGAGQVIKGWDEGLLDMCIGEKRVLTIPPEFGYGQRAIGPIPAGSTLVFETELVGIDGVPKPEKIETKVVEGAESAAEAISEATEAAATASQKVAGKVAEAIVDAAKAAKTIIADTDDAPEHEEL</sequence>
<organism>
    <name type="scientific">Gibberella zeae (strain ATCC MYA-4620 / CBS 123657 / FGSC 9075 / NRRL 31084 / PH-1)</name>
    <name type="common">Wheat head blight fungus</name>
    <name type="synonym">Fusarium graminearum</name>
    <dbReference type="NCBI Taxonomy" id="229533"/>
    <lineage>
        <taxon>Eukaryota</taxon>
        <taxon>Fungi</taxon>
        <taxon>Dikarya</taxon>
        <taxon>Ascomycota</taxon>
        <taxon>Pezizomycotina</taxon>
        <taxon>Sordariomycetes</taxon>
        <taxon>Hypocreomycetidae</taxon>
        <taxon>Hypocreales</taxon>
        <taxon>Nectriaceae</taxon>
        <taxon>Fusarium</taxon>
    </lineage>
</organism>
<name>FKBP2_GIBZE</name>
<dbReference type="EC" id="5.2.1.8"/>
<dbReference type="EMBL" id="DS231663">
    <property type="protein sequence ID" value="ESU06720.1"/>
    <property type="molecule type" value="Genomic_DNA"/>
</dbReference>
<dbReference type="EMBL" id="HG970332">
    <property type="protein sequence ID" value="CEF73535.1"/>
    <property type="molecule type" value="Genomic_DNA"/>
</dbReference>
<dbReference type="RefSeq" id="XP_011317205.1">
    <property type="nucleotide sequence ID" value="XM_011318903.1"/>
</dbReference>
<dbReference type="SMR" id="Q4IN00"/>
<dbReference type="FunCoup" id="Q4IN00">
    <property type="interactions" value="558"/>
</dbReference>
<dbReference type="STRING" id="229533.Q4IN00"/>
<dbReference type="GeneID" id="23548849"/>
<dbReference type="KEGG" id="fgr:FGSG_01408"/>
<dbReference type="VEuPathDB" id="FungiDB:FGRAMPH1_01G03459"/>
<dbReference type="eggNOG" id="KOG0549">
    <property type="taxonomic scope" value="Eukaryota"/>
</dbReference>
<dbReference type="HOGENOM" id="CLU_013615_8_1_1"/>
<dbReference type="InParanoid" id="Q4IN00"/>
<dbReference type="OrthoDB" id="123407at110618"/>
<dbReference type="Proteomes" id="UP000070720">
    <property type="component" value="Chromosome 1"/>
</dbReference>
<dbReference type="GO" id="GO:0005783">
    <property type="term" value="C:endoplasmic reticulum"/>
    <property type="evidence" value="ECO:0007669"/>
    <property type="project" value="UniProtKB-SubCell"/>
</dbReference>
<dbReference type="GO" id="GO:0003755">
    <property type="term" value="F:peptidyl-prolyl cis-trans isomerase activity"/>
    <property type="evidence" value="ECO:0007669"/>
    <property type="project" value="UniProtKB-KW"/>
</dbReference>
<dbReference type="GO" id="GO:0061077">
    <property type="term" value="P:chaperone-mediated protein folding"/>
    <property type="evidence" value="ECO:0007669"/>
    <property type="project" value="InterPro"/>
</dbReference>
<dbReference type="FunFam" id="3.10.50.40:FF:000006">
    <property type="entry name" value="Peptidyl-prolyl cis-trans isomerase"/>
    <property type="match status" value="1"/>
</dbReference>
<dbReference type="Gene3D" id="3.10.50.40">
    <property type="match status" value="1"/>
</dbReference>
<dbReference type="InterPro" id="IPR044609">
    <property type="entry name" value="FKBP2/11"/>
</dbReference>
<dbReference type="InterPro" id="IPR046357">
    <property type="entry name" value="PPIase_dom_sf"/>
</dbReference>
<dbReference type="InterPro" id="IPR001179">
    <property type="entry name" value="PPIase_FKBP_dom"/>
</dbReference>
<dbReference type="PANTHER" id="PTHR45779">
    <property type="entry name" value="PEPTIDYLPROLYL ISOMERASE"/>
    <property type="match status" value="1"/>
</dbReference>
<dbReference type="PANTHER" id="PTHR45779:SF7">
    <property type="entry name" value="PEPTIDYLPROLYL ISOMERASE"/>
    <property type="match status" value="1"/>
</dbReference>
<dbReference type="Pfam" id="PF00254">
    <property type="entry name" value="FKBP_C"/>
    <property type="match status" value="1"/>
</dbReference>
<dbReference type="SUPFAM" id="SSF54534">
    <property type="entry name" value="FKBP-like"/>
    <property type="match status" value="1"/>
</dbReference>
<dbReference type="PROSITE" id="PS00014">
    <property type="entry name" value="ER_TARGET"/>
    <property type="match status" value="1"/>
</dbReference>
<dbReference type="PROSITE" id="PS50059">
    <property type="entry name" value="FKBP_PPIASE"/>
    <property type="match status" value="1"/>
</dbReference>
<gene>
    <name type="primary">FPR2</name>
    <name type="ORF">FGRRES_01408</name>
    <name type="ORF">FGSG_01408</name>
</gene>
<feature type="signal peptide" evidence="2">
    <location>
        <begin position="1"/>
        <end position="19"/>
    </location>
</feature>
<feature type="chain" id="PRO_0000233069" description="FK506-binding protein 2">
    <location>
        <begin position="20"/>
        <end position="195"/>
    </location>
</feature>
<feature type="domain" description="PPIase FKBP-type" evidence="3">
    <location>
        <begin position="39"/>
        <end position="127"/>
    </location>
</feature>
<feature type="short sequence motif" description="Prevents secretion from ER" evidence="4">
    <location>
        <begin position="192"/>
        <end position="195"/>
    </location>
</feature>
<evidence type="ECO:0000250" key="1"/>
<evidence type="ECO:0000255" key="2"/>
<evidence type="ECO:0000255" key="3">
    <source>
        <dbReference type="PROSITE-ProRule" id="PRU00277"/>
    </source>
</evidence>
<evidence type="ECO:0000255" key="4">
    <source>
        <dbReference type="PROSITE-ProRule" id="PRU10138"/>
    </source>
</evidence>
<evidence type="ECO:0000305" key="5"/>
<protein>
    <recommendedName>
        <fullName>FK506-binding protein 2</fullName>
        <ecNumber>5.2.1.8</ecNumber>
    </recommendedName>
    <alternativeName>
        <fullName>Peptidyl-prolyl cis-trans isomerase</fullName>
        <shortName>PPIase</shortName>
    </alternativeName>
    <alternativeName>
        <fullName>Rotamase</fullName>
    </alternativeName>
</protein>
<accession>Q4IN00</accession>
<accession>A0A098D520</accession>
<accession>A0A0E0RQL0</accession>
<accession>V6R4C2</accession>
<proteinExistence type="inferred from homology"/>
<comment type="function">
    <text evidence="1">PPIases accelerate the folding of proteins. It catalyzes the cis-trans isomerization of proline imidic peptide bonds in oligopeptides (By similarity).</text>
</comment>
<comment type="catalytic activity">
    <reaction>
        <text>[protein]-peptidylproline (omega=180) = [protein]-peptidylproline (omega=0)</text>
        <dbReference type="Rhea" id="RHEA:16237"/>
        <dbReference type="Rhea" id="RHEA-COMP:10747"/>
        <dbReference type="Rhea" id="RHEA-COMP:10748"/>
        <dbReference type="ChEBI" id="CHEBI:83833"/>
        <dbReference type="ChEBI" id="CHEBI:83834"/>
        <dbReference type="EC" id="5.2.1.8"/>
    </reaction>
</comment>
<comment type="activity regulation">
    <text evidence="1">Inhibited by both FK506 and rapamycin.</text>
</comment>
<comment type="subcellular location">
    <subcellularLocation>
        <location evidence="4">Endoplasmic reticulum</location>
    </subcellularLocation>
</comment>
<comment type="similarity">
    <text evidence="5">Belongs to the FKBP-type PPIase family. FKBP2 subfamily.</text>
</comment>
<keyword id="KW-0256">Endoplasmic reticulum</keyword>
<keyword id="KW-0413">Isomerase</keyword>
<keyword id="KW-1185">Reference proteome</keyword>
<keyword id="KW-0697">Rotamase</keyword>
<keyword id="KW-0732">Signal</keyword>
<reference key="1">
    <citation type="journal article" date="2007" name="Science">
        <title>The Fusarium graminearum genome reveals a link between localized polymorphism and pathogen specialization.</title>
        <authorList>
            <person name="Cuomo C.A."/>
            <person name="Gueldener U."/>
            <person name="Xu J.-R."/>
            <person name="Trail F."/>
            <person name="Turgeon B.G."/>
            <person name="Di Pietro A."/>
            <person name="Walton J.D."/>
            <person name="Ma L.-J."/>
            <person name="Baker S.E."/>
            <person name="Rep M."/>
            <person name="Adam G."/>
            <person name="Antoniw J."/>
            <person name="Baldwin T."/>
            <person name="Calvo S.E."/>
            <person name="Chang Y.-L."/>
            <person name="DeCaprio D."/>
            <person name="Gale L.R."/>
            <person name="Gnerre S."/>
            <person name="Goswami R.S."/>
            <person name="Hammond-Kosack K."/>
            <person name="Harris L.J."/>
            <person name="Hilburn K."/>
            <person name="Kennell J.C."/>
            <person name="Kroken S."/>
            <person name="Magnuson J.K."/>
            <person name="Mannhaupt G."/>
            <person name="Mauceli E.W."/>
            <person name="Mewes H.-W."/>
            <person name="Mitterbauer R."/>
            <person name="Muehlbauer G."/>
            <person name="Muensterkoetter M."/>
            <person name="Nelson D."/>
            <person name="O'Donnell K."/>
            <person name="Ouellet T."/>
            <person name="Qi W."/>
            <person name="Quesneville H."/>
            <person name="Roncero M.I.G."/>
            <person name="Seong K.-Y."/>
            <person name="Tetko I.V."/>
            <person name="Urban M."/>
            <person name="Waalwijk C."/>
            <person name="Ward T.J."/>
            <person name="Yao J."/>
            <person name="Birren B.W."/>
            <person name="Kistler H.C."/>
        </authorList>
    </citation>
    <scope>NUCLEOTIDE SEQUENCE [LARGE SCALE GENOMIC DNA]</scope>
    <source>
        <strain>ATCC MYA-4620 / CBS 123657 / FGSC 9075 / NRRL 31084 / PH-1</strain>
    </source>
</reference>
<reference key="2">
    <citation type="journal article" date="2010" name="Nature">
        <title>Comparative genomics reveals mobile pathogenicity chromosomes in Fusarium.</title>
        <authorList>
            <person name="Ma L.-J."/>
            <person name="van der Does H.C."/>
            <person name="Borkovich K.A."/>
            <person name="Coleman J.J."/>
            <person name="Daboussi M.-J."/>
            <person name="Di Pietro A."/>
            <person name="Dufresne M."/>
            <person name="Freitag M."/>
            <person name="Grabherr M."/>
            <person name="Henrissat B."/>
            <person name="Houterman P.M."/>
            <person name="Kang S."/>
            <person name="Shim W.-B."/>
            <person name="Woloshuk C."/>
            <person name="Xie X."/>
            <person name="Xu J.-R."/>
            <person name="Antoniw J."/>
            <person name="Baker S.E."/>
            <person name="Bluhm B.H."/>
            <person name="Breakspear A."/>
            <person name="Brown D.W."/>
            <person name="Butchko R.A.E."/>
            <person name="Chapman S."/>
            <person name="Coulson R."/>
            <person name="Coutinho P.M."/>
            <person name="Danchin E.G.J."/>
            <person name="Diener A."/>
            <person name="Gale L.R."/>
            <person name="Gardiner D.M."/>
            <person name="Goff S."/>
            <person name="Hammond-Kosack K.E."/>
            <person name="Hilburn K."/>
            <person name="Hua-Van A."/>
            <person name="Jonkers W."/>
            <person name="Kazan K."/>
            <person name="Kodira C.D."/>
            <person name="Koehrsen M."/>
            <person name="Kumar L."/>
            <person name="Lee Y.-H."/>
            <person name="Li L."/>
            <person name="Manners J.M."/>
            <person name="Miranda-Saavedra D."/>
            <person name="Mukherjee M."/>
            <person name="Park G."/>
            <person name="Park J."/>
            <person name="Park S.-Y."/>
            <person name="Proctor R.H."/>
            <person name="Regev A."/>
            <person name="Ruiz-Roldan M.C."/>
            <person name="Sain D."/>
            <person name="Sakthikumar S."/>
            <person name="Sykes S."/>
            <person name="Schwartz D.C."/>
            <person name="Turgeon B.G."/>
            <person name="Wapinski I."/>
            <person name="Yoder O."/>
            <person name="Young S."/>
            <person name="Zeng Q."/>
            <person name="Zhou S."/>
            <person name="Galagan J."/>
            <person name="Cuomo C.A."/>
            <person name="Kistler H.C."/>
            <person name="Rep M."/>
        </authorList>
    </citation>
    <scope>GENOME REANNOTATION</scope>
    <source>
        <strain>ATCC MYA-4620 / CBS 123657 / FGSC 9075 / NRRL 31084 / PH-1</strain>
    </source>
</reference>
<reference key="3">
    <citation type="journal article" date="2006" name="BMC Genomics">
        <title>Identification and comparative analysis of sixteen fungal peptidyl-prolyl cis/trans isomerase repertoires.</title>
        <authorList>
            <person name="Pemberton T.J."/>
        </authorList>
    </citation>
    <scope>REVISION OF GENE MODEL</scope>
</reference>
<reference key="4">
    <citation type="journal article" date="2015" name="BMC Genomics">
        <title>The completed genome sequence of the pathogenic ascomycete fungus Fusarium graminearum.</title>
        <authorList>
            <person name="King R."/>
            <person name="Urban M."/>
            <person name="Hammond-Kosack M.C.U."/>
            <person name="Hassani-Pak K."/>
            <person name="Hammond-Kosack K.E."/>
        </authorList>
    </citation>
    <scope>NUCLEOTIDE SEQUENCE [LARGE SCALE GENOMIC DNA]</scope>
    <source>
        <strain>ATCC MYA-4620 / CBS 123657 / FGSC 9075 / NRRL 31084 / PH-1</strain>
    </source>
</reference>